<gene>
    <name evidence="1" type="primary">purA</name>
    <name type="ordered locus">A2cp1_2691</name>
</gene>
<evidence type="ECO:0000255" key="1">
    <source>
        <dbReference type="HAMAP-Rule" id="MF_00011"/>
    </source>
</evidence>
<name>PURA_ANAD2</name>
<accession>B8JDH9</accession>
<comment type="function">
    <text evidence="1">Plays an important role in the de novo pathway of purine nucleotide biosynthesis. Catalyzes the first committed step in the biosynthesis of AMP from IMP.</text>
</comment>
<comment type="catalytic activity">
    <reaction evidence="1">
        <text>IMP + L-aspartate + GTP = N(6)-(1,2-dicarboxyethyl)-AMP + GDP + phosphate + 2 H(+)</text>
        <dbReference type="Rhea" id="RHEA:15753"/>
        <dbReference type="ChEBI" id="CHEBI:15378"/>
        <dbReference type="ChEBI" id="CHEBI:29991"/>
        <dbReference type="ChEBI" id="CHEBI:37565"/>
        <dbReference type="ChEBI" id="CHEBI:43474"/>
        <dbReference type="ChEBI" id="CHEBI:57567"/>
        <dbReference type="ChEBI" id="CHEBI:58053"/>
        <dbReference type="ChEBI" id="CHEBI:58189"/>
        <dbReference type="EC" id="6.3.4.4"/>
    </reaction>
</comment>
<comment type="cofactor">
    <cofactor evidence="1">
        <name>Mg(2+)</name>
        <dbReference type="ChEBI" id="CHEBI:18420"/>
    </cofactor>
    <text evidence="1">Binds 1 Mg(2+) ion per subunit.</text>
</comment>
<comment type="pathway">
    <text evidence="1">Purine metabolism; AMP biosynthesis via de novo pathway; AMP from IMP: step 1/2.</text>
</comment>
<comment type="subunit">
    <text evidence="1">Homodimer.</text>
</comment>
<comment type="subcellular location">
    <subcellularLocation>
        <location evidence="1">Cytoplasm</location>
    </subcellularLocation>
</comment>
<comment type="similarity">
    <text evidence="1">Belongs to the adenylosuccinate synthetase family.</text>
</comment>
<organism>
    <name type="scientific">Anaeromyxobacter dehalogenans (strain 2CP-1 / ATCC BAA-258)</name>
    <dbReference type="NCBI Taxonomy" id="455488"/>
    <lineage>
        <taxon>Bacteria</taxon>
        <taxon>Pseudomonadati</taxon>
        <taxon>Myxococcota</taxon>
        <taxon>Myxococcia</taxon>
        <taxon>Myxococcales</taxon>
        <taxon>Cystobacterineae</taxon>
        <taxon>Anaeromyxobacteraceae</taxon>
        <taxon>Anaeromyxobacter</taxon>
    </lineage>
</organism>
<sequence length="432" mass="46695">MPNVVVVGAQWGDEGKGKIVDLLTQYADVVVRFQGGNNAGHTLVVGGEKTVLHLIPSGILHPGKSCVIGNGVVIDPEVLVLEIDRLKAKGALKDDGQLVVSLDAHVIMPWHKAIDVAREQAMGEGKIGTTGRGIGPTYEDKVARRGLRIRDLLDEARLARKVKERAALAREELARLGAKLELDEPALVKRYAELGRRVAGYATDVSIWLHRALQQGKSLLFEGAQGTMLDVDHGTYPFVTSSNTVAGNAVVGCGLGPTAVDYVLGISKAYSTRVGGGPYPTELKDETGERLRKLGGEYGATTGRPRRTGWLDALALRYAVRVNGLSGIAMTKLDVLTGFDTVKIAVGYRLDGKVLDEMPSDPEVIERCTPVYEELPGWTEKLEHLRTWDDLPPRARAYVKRVEELAGVKVVGCSVGADRGETILVENPFLAR</sequence>
<feature type="chain" id="PRO_1000116449" description="Adenylosuccinate synthetase">
    <location>
        <begin position="1"/>
        <end position="432"/>
    </location>
</feature>
<feature type="active site" description="Proton acceptor" evidence="1">
    <location>
        <position position="13"/>
    </location>
</feature>
<feature type="active site" description="Proton donor" evidence="1">
    <location>
        <position position="41"/>
    </location>
</feature>
<feature type="binding site" evidence="1">
    <location>
        <begin position="12"/>
        <end position="18"/>
    </location>
    <ligand>
        <name>GTP</name>
        <dbReference type="ChEBI" id="CHEBI:37565"/>
    </ligand>
</feature>
<feature type="binding site" description="in other chain" evidence="1">
    <location>
        <begin position="13"/>
        <end position="16"/>
    </location>
    <ligand>
        <name>IMP</name>
        <dbReference type="ChEBI" id="CHEBI:58053"/>
        <note>ligand shared between dimeric partners</note>
    </ligand>
</feature>
<feature type="binding site" evidence="1">
    <location>
        <position position="13"/>
    </location>
    <ligand>
        <name>Mg(2+)</name>
        <dbReference type="ChEBI" id="CHEBI:18420"/>
    </ligand>
</feature>
<feature type="binding site" description="in other chain" evidence="1">
    <location>
        <begin position="38"/>
        <end position="41"/>
    </location>
    <ligand>
        <name>IMP</name>
        <dbReference type="ChEBI" id="CHEBI:58053"/>
        <note>ligand shared between dimeric partners</note>
    </ligand>
</feature>
<feature type="binding site" evidence="1">
    <location>
        <begin position="40"/>
        <end position="42"/>
    </location>
    <ligand>
        <name>GTP</name>
        <dbReference type="ChEBI" id="CHEBI:37565"/>
    </ligand>
</feature>
<feature type="binding site" evidence="1">
    <location>
        <position position="40"/>
    </location>
    <ligand>
        <name>Mg(2+)</name>
        <dbReference type="ChEBI" id="CHEBI:18420"/>
    </ligand>
</feature>
<feature type="binding site" description="in other chain" evidence="1">
    <location>
        <position position="130"/>
    </location>
    <ligand>
        <name>IMP</name>
        <dbReference type="ChEBI" id="CHEBI:58053"/>
        <note>ligand shared between dimeric partners</note>
    </ligand>
</feature>
<feature type="binding site" evidence="1">
    <location>
        <position position="144"/>
    </location>
    <ligand>
        <name>IMP</name>
        <dbReference type="ChEBI" id="CHEBI:58053"/>
        <note>ligand shared between dimeric partners</note>
    </ligand>
</feature>
<feature type="binding site" description="in other chain" evidence="1">
    <location>
        <position position="225"/>
    </location>
    <ligand>
        <name>IMP</name>
        <dbReference type="ChEBI" id="CHEBI:58053"/>
        <note>ligand shared between dimeric partners</note>
    </ligand>
</feature>
<feature type="binding site" description="in other chain" evidence="1">
    <location>
        <position position="240"/>
    </location>
    <ligand>
        <name>IMP</name>
        <dbReference type="ChEBI" id="CHEBI:58053"/>
        <note>ligand shared between dimeric partners</note>
    </ligand>
</feature>
<feature type="binding site" evidence="1">
    <location>
        <begin position="300"/>
        <end position="306"/>
    </location>
    <ligand>
        <name>substrate</name>
    </ligand>
</feature>
<feature type="binding site" description="in other chain" evidence="1">
    <location>
        <position position="304"/>
    </location>
    <ligand>
        <name>IMP</name>
        <dbReference type="ChEBI" id="CHEBI:58053"/>
        <note>ligand shared between dimeric partners</note>
    </ligand>
</feature>
<feature type="binding site" evidence="1">
    <location>
        <position position="306"/>
    </location>
    <ligand>
        <name>GTP</name>
        <dbReference type="ChEBI" id="CHEBI:37565"/>
    </ligand>
</feature>
<feature type="binding site" evidence="1">
    <location>
        <begin position="332"/>
        <end position="334"/>
    </location>
    <ligand>
        <name>GTP</name>
        <dbReference type="ChEBI" id="CHEBI:37565"/>
    </ligand>
</feature>
<feature type="binding site" evidence="1">
    <location>
        <begin position="414"/>
        <end position="416"/>
    </location>
    <ligand>
        <name>GTP</name>
        <dbReference type="ChEBI" id="CHEBI:37565"/>
    </ligand>
</feature>
<dbReference type="EC" id="6.3.4.4" evidence="1"/>
<dbReference type="EMBL" id="CP001359">
    <property type="protein sequence ID" value="ACL66028.1"/>
    <property type="molecule type" value="Genomic_DNA"/>
</dbReference>
<dbReference type="RefSeq" id="WP_012633798.1">
    <property type="nucleotide sequence ID" value="NC_011891.1"/>
</dbReference>
<dbReference type="SMR" id="B8JDH9"/>
<dbReference type="KEGG" id="acp:A2cp1_2691"/>
<dbReference type="HOGENOM" id="CLU_029848_0_0_7"/>
<dbReference type="UniPathway" id="UPA00075">
    <property type="reaction ID" value="UER00335"/>
</dbReference>
<dbReference type="Proteomes" id="UP000007089">
    <property type="component" value="Chromosome"/>
</dbReference>
<dbReference type="GO" id="GO:0005737">
    <property type="term" value="C:cytoplasm"/>
    <property type="evidence" value="ECO:0007669"/>
    <property type="project" value="UniProtKB-SubCell"/>
</dbReference>
<dbReference type="GO" id="GO:0004019">
    <property type="term" value="F:adenylosuccinate synthase activity"/>
    <property type="evidence" value="ECO:0007669"/>
    <property type="project" value="UniProtKB-UniRule"/>
</dbReference>
<dbReference type="GO" id="GO:0005525">
    <property type="term" value="F:GTP binding"/>
    <property type="evidence" value="ECO:0007669"/>
    <property type="project" value="UniProtKB-UniRule"/>
</dbReference>
<dbReference type="GO" id="GO:0000287">
    <property type="term" value="F:magnesium ion binding"/>
    <property type="evidence" value="ECO:0007669"/>
    <property type="project" value="UniProtKB-UniRule"/>
</dbReference>
<dbReference type="GO" id="GO:0044208">
    <property type="term" value="P:'de novo' AMP biosynthetic process"/>
    <property type="evidence" value="ECO:0007669"/>
    <property type="project" value="UniProtKB-UniRule"/>
</dbReference>
<dbReference type="GO" id="GO:0046040">
    <property type="term" value="P:IMP metabolic process"/>
    <property type="evidence" value="ECO:0007669"/>
    <property type="project" value="TreeGrafter"/>
</dbReference>
<dbReference type="CDD" id="cd03108">
    <property type="entry name" value="AdSS"/>
    <property type="match status" value="1"/>
</dbReference>
<dbReference type="FunFam" id="1.10.300.10:FF:000001">
    <property type="entry name" value="Adenylosuccinate synthetase"/>
    <property type="match status" value="1"/>
</dbReference>
<dbReference type="FunFam" id="3.90.170.10:FF:000001">
    <property type="entry name" value="Adenylosuccinate synthetase"/>
    <property type="match status" value="1"/>
</dbReference>
<dbReference type="Gene3D" id="3.40.440.10">
    <property type="entry name" value="Adenylosuccinate Synthetase, subunit A, domain 1"/>
    <property type="match status" value="1"/>
</dbReference>
<dbReference type="Gene3D" id="1.10.300.10">
    <property type="entry name" value="Adenylosuccinate Synthetase, subunit A, domain 2"/>
    <property type="match status" value="1"/>
</dbReference>
<dbReference type="Gene3D" id="3.90.170.10">
    <property type="entry name" value="Adenylosuccinate Synthetase, subunit A, domain 3"/>
    <property type="match status" value="1"/>
</dbReference>
<dbReference type="HAMAP" id="MF_00011">
    <property type="entry name" value="Adenylosucc_synth"/>
    <property type="match status" value="1"/>
</dbReference>
<dbReference type="InterPro" id="IPR018220">
    <property type="entry name" value="Adenylosuccin_syn_GTP-bd"/>
</dbReference>
<dbReference type="InterPro" id="IPR033128">
    <property type="entry name" value="Adenylosuccin_syn_Lys_AS"/>
</dbReference>
<dbReference type="InterPro" id="IPR042109">
    <property type="entry name" value="Adenylosuccinate_synth_dom1"/>
</dbReference>
<dbReference type="InterPro" id="IPR042110">
    <property type="entry name" value="Adenylosuccinate_synth_dom2"/>
</dbReference>
<dbReference type="InterPro" id="IPR042111">
    <property type="entry name" value="Adenylosuccinate_synth_dom3"/>
</dbReference>
<dbReference type="InterPro" id="IPR001114">
    <property type="entry name" value="Adenylosuccinate_synthetase"/>
</dbReference>
<dbReference type="InterPro" id="IPR027417">
    <property type="entry name" value="P-loop_NTPase"/>
</dbReference>
<dbReference type="NCBIfam" id="NF002223">
    <property type="entry name" value="PRK01117.1"/>
    <property type="match status" value="1"/>
</dbReference>
<dbReference type="NCBIfam" id="TIGR00184">
    <property type="entry name" value="purA"/>
    <property type="match status" value="1"/>
</dbReference>
<dbReference type="PANTHER" id="PTHR11846">
    <property type="entry name" value="ADENYLOSUCCINATE SYNTHETASE"/>
    <property type="match status" value="1"/>
</dbReference>
<dbReference type="PANTHER" id="PTHR11846:SF0">
    <property type="entry name" value="ADENYLOSUCCINATE SYNTHETASE"/>
    <property type="match status" value="1"/>
</dbReference>
<dbReference type="Pfam" id="PF00709">
    <property type="entry name" value="Adenylsucc_synt"/>
    <property type="match status" value="1"/>
</dbReference>
<dbReference type="SMART" id="SM00788">
    <property type="entry name" value="Adenylsucc_synt"/>
    <property type="match status" value="1"/>
</dbReference>
<dbReference type="SUPFAM" id="SSF52540">
    <property type="entry name" value="P-loop containing nucleoside triphosphate hydrolases"/>
    <property type="match status" value="1"/>
</dbReference>
<dbReference type="PROSITE" id="PS01266">
    <property type="entry name" value="ADENYLOSUCCIN_SYN_1"/>
    <property type="match status" value="1"/>
</dbReference>
<dbReference type="PROSITE" id="PS00513">
    <property type="entry name" value="ADENYLOSUCCIN_SYN_2"/>
    <property type="match status" value="1"/>
</dbReference>
<protein>
    <recommendedName>
        <fullName evidence="1">Adenylosuccinate synthetase</fullName>
        <shortName evidence="1">AMPSase</shortName>
        <shortName evidence="1">AdSS</shortName>
        <ecNumber evidence="1">6.3.4.4</ecNumber>
    </recommendedName>
    <alternativeName>
        <fullName evidence="1">IMP--aspartate ligase</fullName>
    </alternativeName>
</protein>
<proteinExistence type="inferred from homology"/>
<reference key="1">
    <citation type="submission" date="2009-01" db="EMBL/GenBank/DDBJ databases">
        <title>Complete sequence of Anaeromyxobacter dehalogenans 2CP-1.</title>
        <authorList>
            <person name="Lucas S."/>
            <person name="Copeland A."/>
            <person name="Lapidus A."/>
            <person name="Glavina del Rio T."/>
            <person name="Dalin E."/>
            <person name="Tice H."/>
            <person name="Bruce D."/>
            <person name="Goodwin L."/>
            <person name="Pitluck S."/>
            <person name="Saunders E."/>
            <person name="Brettin T."/>
            <person name="Detter J.C."/>
            <person name="Han C."/>
            <person name="Larimer F."/>
            <person name="Land M."/>
            <person name="Hauser L."/>
            <person name="Kyrpides N."/>
            <person name="Ovchinnikova G."/>
            <person name="Beliaev A.S."/>
            <person name="Richardson P."/>
        </authorList>
    </citation>
    <scope>NUCLEOTIDE SEQUENCE [LARGE SCALE GENOMIC DNA]</scope>
    <source>
        <strain>2CP-1 / ATCC BAA-258</strain>
    </source>
</reference>
<keyword id="KW-0963">Cytoplasm</keyword>
<keyword id="KW-0342">GTP-binding</keyword>
<keyword id="KW-0436">Ligase</keyword>
<keyword id="KW-0460">Magnesium</keyword>
<keyword id="KW-0479">Metal-binding</keyword>
<keyword id="KW-0547">Nucleotide-binding</keyword>
<keyword id="KW-0658">Purine biosynthesis</keyword>